<name>GSA2_OCEIH</name>
<keyword id="KW-0963">Cytoplasm</keyword>
<keyword id="KW-0413">Isomerase</keyword>
<keyword id="KW-0627">Porphyrin biosynthesis</keyword>
<keyword id="KW-0663">Pyridoxal phosphate</keyword>
<keyword id="KW-1185">Reference proteome</keyword>
<feature type="chain" id="PRO_0000243592" description="Glutamate-1-semialdehyde 2,1-aminomutase 2">
    <location>
        <begin position="1"/>
        <end position="428"/>
    </location>
</feature>
<feature type="modified residue" description="N6-(pyridoxal phosphate)lysine" evidence="1">
    <location>
        <position position="267"/>
    </location>
</feature>
<sequence>MTLNQSIDAYKEAVDLMPGGVNSPVRAFKSVGMNPIFMKEGKGSKIVDIDNNEYIDYVLSWGPLILGHSDERVVKKLQDITAKGTSFGAPTLLENDLAKLVIDRVPSIEMVRMVNSGTEATMSAIRLARGYTDRDLILKFEGSYHGHGDSLLIKAGSGVATLGLPDSPGVPENIAKNTITVPYNDTDSLKLAFENYGDRIAAIIMEPVCGNMGVVPPKDGFLQYVRHITEENGSLLIFDEVMTGFRVGYHCAQGHYDVTPDLTCLGKVIGGGLPVGAYGGKREIMEQIAPTGPIYQAGTLSGNPLAMTAGYETLSSLSEESYEDINNKVDTLVNGFRDAADKFDIPIHINRAGSMVGVFFTDEEVINFETAQTSNLDYFAQYYRSMVNEGIFLPPSQFEGLFLSTAHTDDDIEKTVKAIHKAFEQIEK</sequence>
<proteinExistence type="inferred from homology"/>
<accession>Q8CZE3</accession>
<dbReference type="EC" id="5.4.3.8" evidence="1"/>
<dbReference type="EMBL" id="BA000028">
    <property type="protein sequence ID" value="BAC14021.1"/>
    <property type="molecule type" value="Genomic_DNA"/>
</dbReference>
<dbReference type="RefSeq" id="WP_011066460.1">
    <property type="nucleotide sequence ID" value="NC_004193.1"/>
</dbReference>
<dbReference type="SMR" id="Q8CZE3"/>
<dbReference type="STRING" id="221109.gene:10734311"/>
<dbReference type="KEGG" id="oih:OB2065"/>
<dbReference type="eggNOG" id="COG0001">
    <property type="taxonomic scope" value="Bacteria"/>
</dbReference>
<dbReference type="HOGENOM" id="CLU_016922_1_5_9"/>
<dbReference type="OrthoDB" id="9807885at2"/>
<dbReference type="PhylomeDB" id="Q8CZE3"/>
<dbReference type="UniPathway" id="UPA00251">
    <property type="reaction ID" value="UER00317"/>
</dbReference>
<dbReference type="Proteomes" id="UP000000822">
    <property type="component" value="Chromosome"/>
</dbReference>
<dbReference type="GO" id="GO:0005737">
    <property type="term" value="C:cytoplasm"/>
    <property type="evidence" value="ECO:0007669"/>
    <property type="project" value="UniProtKB-SubCell"/>
</dbReference>
<dbReference type="GO" id="GO:0042286">
    <property type="term" value="F:glutamate-1-semialdehyde 2,1-aminomutase activity"/>
    <property type="evidence" value="ECO:0007669"/>
    <property type="project" value="UniProtKB-UniRule"/>
</dbReference>
<dbReference type="GO" id="GO:0030170">
    <property type="term" value="F:pyridoxal phosphate binding"/>
    <property type="evidence" value="ECO:0007669"/>
    <property type="project" value="InterPro"/>
</dbReference>
<dbReference type="GO" id="GO:0008483">
    <property type="term" value="F:transaminase activity"/>
    <property type="evidence" value="ECO:0007669"/>
    <property type="project" value="InterPro"/>
</dbReference>
<dbReference type="GO" id="GO:0006782">
    <property type="term" value="P:protoporphyrinogen IX biosynthetic process"/>
    <property type="evidence" value="ECO:0007669"/>
    <property type="project" value="UniProtKB-UniRule"/>
</dbReference>
<dbReference type="CDD" id="cd00610">
    <property type="entry name" value="OAT_like"/>
    <property type="match status" value="1"/>
</dbReference>
<dbReference type="FunFam" id="3.40.640.10:FF:000021">
    <property type="entry name" value="Glutamate-1-semialdehyde 2,1-aminomutase"/>
    <property type="match status" value="1"/>
</dbReference>
<dbReference type="Gene3D" id="3.90.1150.10">
    <property type="entry name" value="Aspartate Aminotransferase, domain 1"/>
    <property type="match status" value="1"/>
</dbReference>
<dbReference type="Gene3D" id="3.40.640.10">
    <property type="entry name" value="Type I PLP-dependent aspartate aminotransferase-like (Major domain)"/>
    <property type="match status" value="1"/>
</dbReference>
<dbReference type="HAMAP" id="MF_00375">
    <property type="entry name" value="HemL_aminotrans_3"/>
    <property type="match status" value="1"/>
</dbReference>
<dbReference type="InterPro" id="IPR004639">
    <property type="entry name" value="4pyrrol_synth_GluAld_NH2Trfase"/>
</dbReference>
<dbReference type="InterPro" id="IPR005814">
    <property type="entry name" value="Aminotrans_3"/>
</dbReference>
<dbReference type="InterPro" id="IPR049704">
    <property type="entry name" value="Aminotrans_3_PPA_site"/>
</dbReference>
<dbReference type="InterPro" id="IPR015424">
    <property type="entry name" value="PyrdxlP-dep_Trfase"/>
</dbReference>
<dbReference type="InterPro" id="IPR015421">
    <property type="entry name" value="PyrdxlP-dep_Trfase_major"/>
</dbReference>
<dbReference type="InterPro" id="IPR015422">
    <property type="entry name" value="PyrdxlP-dep_Trfase_small"/>
</dbReference>
<dbReference type="NCBIfam" id="TIGR00713">
    <property type="entry name" value="hemL"/>
    <property type="match status" value="1"/>
</dbReference>
<dbReference type="NCBIfam" id="NF000818">
    <property type="entry name" value="PRK00062.1"/>
    <property type="match status" value="1"/>
</dbReference>
<dbReference type="PANTHER" id="PTHR43713">
    <property type="entry name" value="GLUTAMATE-1-SEMIALDEHYDE 2,1-AMINOMUTASE"/>
    <property type="match status" value="1"/>
</dbReference>
<dbReference type="PANTHER" id="PTHR43713:SF3">
    <property type="entry name" value="GLUTAMATE-1-SEMIALDEHYDE 2,1-AMINOMUTASE 1, CHLOROPLASTIC-RELATED"/>
    <property type="match status" value="1"/>
</dbReference>
<dbReference type="Pfam" id="PF00202">
    <property type="entry name" value="Aminotran_3"/>
    <property type="match status" value="1"/>
</dbReference>
<dbReference type="SUPFAM" id="SSF53383">
    <property type="entry name" value="PLP-dependent transferases"/>
    <property type="match status" value="1"/>
</dbReference>
<dbReference type="PROSITE" id="PS00600">
    <property type="entry name" value="AA_TRANSFER_CLASS_3"/>
    <property type="match status" value="1"/>
</dbReference>
<gene>
    <name evidence="1" type="primary">hemL2</name>
    <name type="ordered locus">OB2065</name>
</gene>
<protein>
    <recommendedName>
        <fullName evidence="1">Glutamate-1-semialdehyde 2,1-aminomutase 2</fullName>
        <shortName evidence="1">GSA 2</shortName>
        <ecNumber evidence="1">5.4.3.8</ecNumber>
    </recommendedName>
    <alternativeName>
        <fullName evidence="1">Glutamate-1-semialdehyde aminotransferase 2</fullName>
        <shortName evidence="1">GSA-AT 2</shortName>
    </alternativeName>
</protein>
<comment type="catalytic activity">
    <reaction evidence="1">
        <text>(S)-4-amino-5-oxopentanoate = 5-aminolevulinate</text>
        <dbReference type="Rhea" id="RHEA:14265"/>
        <dbReference type="ChEBI" id="CHEBI:57501"/>
        <dbReference type="ChEBI" id="CHEBI:356416"/>
        <dbReference type="EC" id="5.4.3.8"/>
    </reaction>
</comment>
<comment type="cofactor">
    <cofactor evidence="1">
        <name>pyridoxal 5'-phosphate</name>
        <dbReference type="ChEBI" id="CHEBI:597326"/>
    </cofactor>
</comment>
<comment type="pathway">
    <text evidence="1">Porphyrin-containing compound metabolism; protoporphyrin-IX biosynthesis; 5-aminolevulinate from L-glutamyl-tRNA(Glu): step 2/2.</text>
</comment>
<comment type="subunit">
    <text evidence="1">Homodimer.</text>
</comment>
<comment type="subcellular location">
    <subcellularLocation>
        <location evidence="1">Cytoplasm</location>
    </subcellularLocation>
</comment>
<comment type="similarity">
    <text evidence="1">Belongs to the class-III pyridoxal-phosphate-dependent aminotransferase family. HemL subfamily.</text>
</comment>
<reference key="1">
    <citation type="journal article" date="2002" name="Nucleic Acids Res.">
        <title>Genome sequence of Oceanobacillus iheyensis isolated from the Iheya Ridge and its unexpected adaptive capabilities to extreme environments.</title>
        <authorList>
            <person name="Takami H."/>
            <person name="Takaki Y."/>
            <person name="Uchiyama I."/>
        </authorList>
    </citation>
    <scope>NUCLEOTIDE SEQUENCE [LARGE SCALE GENOMIC DNA]</scope>
    <source>
        <strain>DSM 14371 / CIP 107618 / JCM 11309 / KCTC 3954 / HTE831</strain>
    </source>
</reference>
<organism>
    <name type="scientific">Oceanobacillus iheyensis (strain DSM 14371 / CIP 107618 / JCM 11309 / KCTC 3954 / HTE831)</name>
    <dbReference type="NCBI Taxonomy" id="221109"/>
    <lineage>
        <taxon>Bacteria</taxon>
        <taxon>Bacillati</taxon>
        <taxon>Bacillota</taxon>
        <taxon>Bacilli</taxon>
        <taxon>Bacillales</taxon>
        <taxon>Bacillaceae</taxon>
        <taxon>Oceanobacillus</taxon>
    </lineage>
</organism>
<evidence type="ECO:0000255" key="1">
    <source>
        <dbReference type="HAMAP-Rule" id="MF_00375"/>
    </source>
</evidence>